<protein>
    <recommendedName>
        <fullName>Dolichyl-diphosphooligosaccharide--protein glycosyltransferase subunit STT3B</fullName>
        <shortName>Oligosaccharyl transferase subunit STT3B</shortName>
        <shortName>STT3-B</shortName>
        <ecNumber>2.4.99.18</ecNumber>
    </recommendedName>
    <alternativeName>
        <fullName>Protein STAUROSPORIN AND TEMPERATURE SENSITIVE 3-LIKE B</fullName>
    </alternativeName>
</protein>
<keyword id="KW-0256">Endoplasmic reticulum</keyword>
<keyword id="KW-0325">Glycoprotein</keyword>
<keyword id="KW-0328">Glycosyltransferase</keyword>
<keyword id="KW-0460">Magnesium</keyword>
<keyword id="KW-0464">Manganese</keyword>
<keyword id="KW-0472">Membrane</keyword>
<keyword id="KW-0479">Metal-binding</keyword>
<keyword id="KW-1185">Reference proteome</keyword>
<keyword id="KW-0808">Transferase</keyword>
<keyword id="KW-0812">Transmembrane</keyword>
<keyword id="KW-1133">Transmembrane helix</keyword>
<organism>
    <name type="scientific">Oryza sativa subsp. japonica</name>
    <name type="common">Rice</name>
    <dbReference type="NCBI Taxonomy" id="39947"/>
    <lineage>
        <taxon>Eukaryota</taxon>
        <taxon>Viridiplantae</taxon>
        <taxon>Streptophyta</taxon>
        <taxon>Embryophyta</taxon>
        <taxon>Tracheophyta</taxon>
        <taxon>Spermatophyta</taxon>
        <taxon>Magnoliopsida</taxon>
        <taxon>Liliopsida</taxon>
        <taxon>Poales</taxon>
        <taxon>Poaceae</taxon>
        <taxon>BOP clade</taxon>
        <taxon>Oryzoideae</taxon>
        <taxon>Oryzeae</taxon>
        <taxon>Oryzinae</taxon>
        <taxon>Oryza</taxon>
        <taxon>Oryza sativa</taxon>
    </lineage>
</organism>
<gene>
    <name type="primary">STT3B</name>
    <name type="ordered locus">Os04g0675500</name>
    <name type="ordered locus">LOC_Os04g57890</name>
    <name type="ORF">OsJ_16609</name>
    <name type="ORF">OSJNBa0018M05.20</name>
</gene>
<sequence length="721" mass="80732">MAAATALDSLPAPLRSLRLKTKQQELLLRVSALALIYVLAFVVRLFSVLRYESMIHEFDPYFNYRTTLFLSDHGFSEFWNWFDFESWYPLGRVVGGTLFPGLMVTAALLHRLLRALSLAVHIREVCVLTAPFFAANTTLVAYAFGREIWDSGAGLVAAALIAVCPGYISRSVAGSYDNEGVAIFALLLTFYLFVRAVNTGSLAWSLASAFGYFYMVSAWGGYVFIINLLPLYVLVLLVTGRYSQRLYVAYNSTYVLGMLLAMQIRFVGFQHVQSGEHMAAMGVFFLLQVFFFLDWVKYLLNDAKLFKSFLRITLTCVITVGTLALGIGTASGYISPWTGRFYSLLDPTYAKDHIPIIASVSEHQPTAWSSFMFDFHILLFLFPAGLYFCFKRLSDATIFIVMYGLTSMYFAGVMVRLILVAAPAVCLISAIAASATIKNLTTLIRTKSKSPQTVSGKSSGSKAAAKGAVDQSLPFQQNVAIALLLGAFYLLSRYAVHCTWVTSEAYSSPSIVLAARGHNGGRVIFDDYREAYYWLRQNTPSDAKIMSWWDYGYQITAMGNRTVIVDNNTWNNTHIATVGRAMSSYEDEAYEIMQSLDVNYVLVVFGGVTGYSSDDINKFLWMVRIGGGVFPVIKEPDYLVNGEYRVDKGAAPKMLNCLMYKLCYYRFGELTTEYGKPPGYDRVRGVEIGNKDIKLEYLEEAFTTSNWIVRIYKVKPPKNRS</sequence>
<comment type="function">
    <text evidence="3">Catalytic subunit of the oligosaccharyl transferase (OST) complex that catalyzes the initial transfer of a defined glycan (Glc(3)Man(9)GlcNAc(2) in eukaryotes) from the lipid carrier dolichol-pyrophosphate to an asparagine residue within an Asn-X-Ser/Thr consensus motif in nascent polypeptide chains, the first step in protein N-glycosylation. N-glycosylation occurs cotranslationally and the complex associates with the Sec61 complex at the channel-forming translocon complex that mediates protein translocation across the endoplasmic reticulum (ER). All subunits are required for a maximal enzyme activity. This subunit contains the active site and the acceptor peptide and donor lipid-linked oligosaccharide (LLO) binding pockets.</text>
</comment>
<comment type="catalytic activity">
    <reaction evidence="3">
        <text>a di-trans,poly-cis-dolichyl diphosphooligosaccharide + L-asparaginyl-[protein] = N(4)-(oligosaccharide-(1-&gt;4)-N-acetyl-beta-D-glucosaminyl-(1-&gt;4)-N-acetyl-beta-D-glucosaminyl)-L-asparaginyl-[protein] + a di-trans,poly-cis-dolichyl diphosphate + H(+)</text>
        <dbReference type="Rhea" id="RHEA:22980"/>
        <dbReference type="Rhea" id="RHEA-COMP:12804"/>
        <dbReference type="Rhea" id="RHEA-COMP:12805"/>
        <dbReference type="Rhea" id="RHEA-COMP:19506"/>
        <dbReference type="Rhea" id="RHEA-COMP:19509"/>
        <dbReference type="ChEBI" id="CHEBI:15378"/>
        <dbReference type="ChEBI" id="CHEBI:50347"/>
        <dbReference type="ChEBI" id="CHEBI:57497"/>
        <dbReference type="ChEBI" id="CHEBI:57570"/>
        <dbReference type="ChEBI" id="CHEBI:132529"/>
        <dbReference type="EC" id="2.4.99.18"/>
    </reaction>
</comment>
<comment type="cofactor">
    <cofactor evidence="2">
        <name>Mg(2+)</name>
        <dbReference type="ChEBI" id="CHEBI:18420"/>
    </cofactor>
    <cofactor evidence="2">
        <name>Mn(2+)</name>
        <dbReference type="ChEBI" id="CHEBI:29035"/>
    </cofactor>
</comment>
<comment type="pathway">
    <text evidence="3">Protein modification; protein glycosylation.</text>
</comment>
<comment type="subunit">
    <text evidence="1">Component of the oligosaccharyltransferase (OST) complex.</text>
</comment>
<comment type="subcellular location">
    <subcellularLocation>
        <location evidence="5">Endoplasmic reticulum membrane</location>
        <topology evidence="5">Multi-pass membrane protein</topology>
    </subcellularLocation>
</comment>
<comment type="domain">
    <text evidence="3">Despite low primary sequence conservation between eukaryotic catalytic subunits and bacterial and archaeal single subunit OSTs (ssOST), structural comparison revealed several common motifs at spatially equivalent positions, like the DXD motif 1 on the external loop 1 and the DXD motif 2 on the external loop 2 involved in binding of the metal ion cofactor and the carboxamide group of the acceptor asparagine, the conserved Glu residue of the TIXE/SVSE motif on the external loop 5 involved in catalysis, as well as the WWDYG and the DK/MI motifs in the globular domain that define the binding pocket for the +2 Ser/Thr of the acceptor sequon. In bacterial ssOSTs, an Arg residue was found to interact with a negatively charged side chain at the -2 position of the sequon. This Arg is conserved in bacterial enzymes and correlates with an extended sequon requirement (Asp-X-Asn-X-Ser/Thr) for bacterial N-glycosylation.</text>
</comment>
<comment type="similarity">
    <text evidence="8">Belongs to the STT3 family.</text>
</comment>
<dbReference type="EC" id="2.4.99.18"/>
<dbReference type="EMBL" id="AL606457">
    <property type="protein sequence ID" value="CAE03245.2"/>
    <property type="molecule type" value="Genomic_DNA"/>
</dbReference>
<dbReference type="EMBL" id="AP008210">
    <property type="protein sequence ID" value="BAF16162.1"/>
    <property type="molecule type" value="Genomic_DNA"/>
</dbReference>
<dbReference type="EMBL" id="AP014960">
    <property type="protein sequence ID" value="BAS91617.1"/>
    <property type="molecule type" value="Genomic_DNA"/>
</dbReference>
<dbReference type="EMBL" id="CM000141">
    <property type="protein sequence ID" value="EAZ32398.1"/>
    <property type="molecule type" value="Genomic_DNA"/>
</dbReference>
<dbReference type="EMBL" id="AK099138">
    <property type="protein sequence ID" value="BAG93946.1"/>
    <property type="molecule type" value="mRNA"/>
</dbReference>
<dbReference type="RefSeq" id="XP_015635991.1">
    <property type="nucleotide sequence ID" value="XM_015780505.1"/>
</dbReference>
<dbReference type="SMR" id="Q7XQ88"/>
<dbReference type="FunCoup" id="Q7XQ88">
    <property type="interactions" value="3842"/>
</dbReference>
<dbReference type="STRING" id="39947.Q7XQ88"/>
<dbReference type="CAZy" id="GT66">
    <property type="family name" value="Glycosyltransferase Family 66"/>
</dbReference>
<dbReference type="GlyCosmos" id="Q7XQ88">
    <property type="glycosylation" value="3 sites, No reported glycans"/>
</dbReference>
<dbReference type="PaxDb" id="39947-Q7XQ88"/>
<dbReference type="EnsemblPlants" id="Os04t0675500-01">
    <property type="protein sequence ID" value="Os04t0675500-01"/>
    <property type="gene ID" value="Os04g0675500"/>
</dbReference>
<dbReference type="EnsemblPlants" id="Os04t0675500-03">
    <property type="protein sequence ID" value="Os04t0675500-03"/>
    <property type="gene ID" value="Os04g0675500"/>
</dbReference>
<dbReference type="Gramene" id="Os04t0675500-01">
    <property type="protein sequence ID" value="Os04t0675500-01"/>
    <property type="gene ID" value="Os04g0675500"/>
</dbReference>
<dbReference type="Gramene" id="Os04t0675500-03">
    <property type="protein sequence ID" value="Os04t0675500-03"/>
    <property type="gene ID" value="Os04g0675500"/>
</dbReference>
<dbReference type="KEGG" id="dosa:Os04g0675500"/>
<dbReference type="eggNOG" id="KOG2292">
    <property type="taxonomic scope" value="Eukaryota"/>
</dbReference>
<dbReference type="HOGENOM" id="CLU_009279_1_0_1"/>
<dbReference type="InParanoid" id="Q7XQ88"/>
<dbReference type="OMA" id="TWYAIGT"/>
<dbReference type="OrthoDB" id="10261066at2759"/>
<dbReference type="UniPathway" id="UPA00378"/>
<dbReference type="Proteomes" id="UP000000763">
    <property type="component" value="Chromosome 4"/>
</dbReference>
<dbReference type="Proteomes" id="UP000007752">
    <property type="component" value="Chromosome 4"/>
</dbReference>
<dbReference type="Proteomes" id="UP000059680">
    <property type="component" value="Chromosome 4"/>
</dbReference>
<dbReference type="GO" id="GO:0005789">
    <property type="term" value="C:endoplasmic reticulum membrane"/>
    <property type="evidence" value="ECO:0007669"/>
    <property type="project" value="UniProtKB-SubCell"/>
</dbReference>
<dbReference type="GO" id="GO:0004579">
    <property type="term" value="F:dolichyl-diphosphooligosaccharide-protein glycotransferase activity"/>
    <property type="evidence" value="ECO:0007669"/>
    <property type="project" value="UniProtKB-EC"/>
</dbReference>
<dbReference type="GO" id="GO:0046872">
    <property type="term" value="F:metal ion binding"/>
    <property type="evidence" value="ECO:0007669"/>
    <property type="project" value="UniProtKB-KW"/>
</dbReference>
<dbReference type="GO" id="GO:0006486">
    <property type="term" value="P:protein glycosylation"/>
    <property type="evidence" value="ECO:0007669"/>
    <property type="project" value="UniProtKB-UniPathway"/>
</dbReference>
<dbReference type="FunFam" id="3.40.50.12610:FF:000002">
    <property type="entry name" value="dolichyl-diphosphooligosaccharide--protein glycosyltransferase subunit STT3A"/>
    <property type="match status" value="1"/>
</dbReference>
<dbReference type="Gene3D" id="3.40.50.12610">
    <property type="match status" value="1"/>
</dbReference>
<dbReference type="InterPro" id="IPR003674">
    <property type="entry name" value="Oligo_trans_STT3"/>
</dbReference>
<dbReference type="InterPro" id="IPR048999">
    <property type="entry name" value="STT3-PglB_core"/>
</dbReference>
<dbReference type="InterPro" id="IPR048307">
    <property type="entry name" value="STT3_N"/>
</dbReference>
<dbReference type="PANTHER" id="PTHR13872">
    <property type="entry name" value="DOLICHYL-DIPHOSPHOOLIGOSACCHARIDE--PROTEIN GLYCOSYLTRANSFERASE SUBUNIT"/>
    <property type="match status" value="1"/>
</dbReference>
<dbReference type="PANTHER" id="PTHR13872:SF1">
    <property type="entry name" value="DOLICHYL-DIPHOSPHOOLIGOSACCHARIDE--PROTEIN GLYCOSYLTRANSFERASE SUBUNIT STT3B"/>
    <property type="match status" value="1"/>
</dbReference>
<dbReference type="Pfam" id="PF02516">
    <property type="entry name" value="STT3"/>
    <property type="match status" value="1"/>
</dbReference>
<dbReference type="Pfam" id="PF21436">
    <property type="entry name" value="STT3-PglB_core"/>
    <property type="match status" value="1"/>
</dbReference>
<proteinExistence type="evidence at transcript level"/>
<reference key="1">
    <citation type="journal article" date="2002" name="Nature">
        <title>Sequence and analysis of rice chromosome 4.</title>
        <authorList>
            <person name="Feng Q."/>
            <person name="Zhang Y."/>
            <person name="Hao P."/>
            <person name="Wang S."/>
            <person name="Fu G."/>
            <person name="Huang Y."/>
            <person name="Li Y."/>
            <person name="Zhu J."/>
            <person name="Liu Y."/>
            <person name="Hu X."/>
            <person name="Jia P."/>
            <person name="Zhang Y."/>
            <person name="Zhao Q."/>
            <person name="Ying K."/>
            <person name="Yu S."/>
            <person name="Tang Y."/>
            <person name="Weng Q."/>
            <person name="Zhang L."/>
            <person name="Lu Y."/>
            <person name="Mu J."/>
            <person name="Lu Y."/>
            <person name="Zhang L.S."/>
            <person name="Yu Z."/>
            <person name="Fan D."/>
            <person name="Liu X."/>
            <person name="Lu T."/>
            <person name="Li C."/>
            <person name="Wu Y."/>
            <person name="Sun T."/>
            <person name="Lei H."/>
            <person name="Li T."/>
            <person name="Hu H."/>
            <person name="Guan J."/>
            <person name="Wu M."/>
            <person name="Zhang R."/>
            <person name="Zhou B."/>
            <person name="Chen Z."/>
            <person name="Chen L."/>
            <person name="Jin Z."/>
            <person name="Wang R."/>
            <person name="Yin H."/>
            <person name="Cai Z."/>
            <person name="Ren S."/>
            <person name="Lv G."/>
            <person name="Gu W."/>
            <person name="Zhu G."/>
            <person name="Tu Y."/>
            <person name="Jia J."/>
            <person name="Zhang Y."/>
            <person name="Chen J."/>
            <person name="Kang H."/>
            <person name="Chen X."/>
            <person name="Shao C."/>
            <person name="Sun Y."/>
            <person name="Hu Q."/>
            <person name="Zhang X."/>
            <person name="Zhang W."/>
            <person name="Wang L."/>
            <person name="Ding C."/>
            <person name="Sheng H."/>
            <person name="Gu J."/>
            <person name="Chen S."/>
            <person name="Ni L."/>
            <person name="Zhu F."/>
            <person name="Chen W."/>
            <person name="Lan L."/>
            <person name="Lai Y."/>
            <person name="Cheng Z."/>
            <person name="Gu M."/>
            <person name="Jiang J."/>
            <person name="Li J."/>
            <person name="Hong G."/>
            <person name="Xue Y."/>
            <person name="Han B."/>
        </authorList>
    </citation>
    <scope>NUCLEOTIDE SEQUENCE [LARGE SCALE GENOMIC DNA]</scope>
    <source>
        <strain>cv. Nipponbare</strain>
    </source>
</reference>
<reference key="2">
    <citation type="journal article" date="2005" name="Nature">
        <title>The map-based sequence of the rice genome.</title>
        <authorList>
            <consortium name="International rice genome sequencing project (IRGSP)"/>
        </authorList>
    </citation>
    <scope>NUCLEOTIDE SEQUENCE [LARGE SCALE GENOMIC DNA]</scope>
    <source>
        <strain>cv. Nipponbare</strain>
    </source>
</reference>
<reference key="3">
    <citation type="journal article" date="2008" name="Nucleic Acids Res.">
        <title>The rice annotation project database (RAP-DB): 2008 update.</title>
        <authorList>
            <consortium name="The rice annotation project (RAP)"/>
        </authorList>
    </citation>
    <scope>GENOME REANNOTATION</scope>
    <source>
        <strain>cv. Nipponbare</strain>
    </source>
</reference>
<reference key="4">
    <citation type="journal article" date="2013" name="Rice">
        <title>Improvement of the Oryza sativa Nipponbare reference genome using next generation sequence and optical map data.</title>
        <authorList>
            <person name="Kawahara Y."/>
            <person name="de la Bastide M."/>
            <person name="Hamilton J.P."/>
            <person name="Kanamori H."/>
            <person name="McCombie W.R."/>
            <person name="Ouyang S."/>
            <person name="Schwartz D.C."/>
            <person name="Tanaka T."/>
            <person name="Wu J."/>
            <person name="Zhou S."/>
            <person name="Childs K.L."/>
            <person name="Davidson R.M."/>
            <person name="Lin H."/>
            <person name="Quesada-Ocampo L."/>
            <person name="Vaillancourt B."/>
            <person name="Sakai H."/>
            <person name="Lee S.S."/>
            <person name="Kim J."/>
            <person name="Numa H."/>
            <person name="Itoh T."/>
            <person name="Buell C.R."/>
            <person name="Matsumoto T."/>
        </authorList>
    </citation>
    <scope>GENOME REANNOTATION</scope>
    <source>
        <strain>cv. Nipponbare</strain>
    </source>
</reference>
<reference key="5">
    <citation type="journal article" date="2005" name="PLoS Biol.">
        <title>The genomes of Oryza sativa: a history of duplications.</title>
        <authorList>
            <person name="Yu J."/>
            <person name="Wang J."/>
            <person name="Lin W."/>
            <person name="Li S."/>
            <person name="Li H."/>
            <person name="Zhou J."/>
            <person name="Ni P."/>
            <person name="Dong W."/>
            <person name="Hu S."/>
            <person name="Zeng C."/>
            <person name="Zhang J."/>
            <person name="Zhang Y."/>
            <person name="Li R."/>
            <person name="Xu Z."/>
            <person name="Li S."/>
            <person name="Li X."/>
            <person name="Zheng H."/>
            <person name="Cong L."/>
            <person name="Lin L."/>
            <person name="Yin J."/>
            <person name="Geng J."/>
            <person name="Li G."/>
            <person name="Shi J."/>
            <person name="Liu J."/>
            <person name="Lv H."/>
            <person name="Li J."/>
            <person name="Wang J."/>
            <person name="Deng Y."/>
            <person name="Ran L."/>
            <person name="Shi X."/>
            <person name="Wang X."/>
            <person name="Wu Q."/>
            <person name="Li C."/>
            <person name="Ren X."/>
            <person name="Wang J."/>
            <person name="Wang X."/>
            <person name="Li D."/>
            <person name="Liu D."/>
            <person name="Zhang X."/>
            <person name="Ji Z."/>
            <person name="Zhao W."/>
            <person name="Sun Y."/>
            <person name="Zhang Z."/>
            <person name="Bao J."/>
            <person name="Han Y."/>
            <person name="Dong L."/>
            <person name="Ji J."/>
            <person name="Chen P."/>
            <person name="Wu S."/>
            <person name="Liu J."/>
            <person name="Xiao Y."/>
            <person name="Bu D."/>
            <person name="Tan J."/>
            <person name="Yang L."/>
            <person name="Ye C."/>
            <person name="Zhang J."/>
            <person name="Xu J."/>
            <person name="Zhou Y."/>
            <person name="Yu Y."/>
            <person name="Zhang B."/>
            <person name="Zhuang S."/>
            <person name="Wei H."/>
            <person name="Liu B."/>
            <person name="Lei M."/>
            <person name="Yu H."/>
            <person name="Li Y."/>
            <person name="Xu H."/>
            <person name="Wei S."/>
            <person name="He X."/>
            <person name="Fang L."/>
            <person name="Zhang Z."/>
            <person name="Zhang Y."/>
            <person name="Huang X."/>
            <person name="Su Z."/>
            <person name="Tong W."/>
            <person name="Li J."/>
            <person name="Tong Z."/>
            <person name="Li S."/>
            <person name="Ye J."/>
            <person name="Wang L."/>
            <person name="Fang L."/>
            <person name="Lei T."/>
            <person name="Chen C.-S."/>
            <person name="Chen H.-C."/>
            <person name="Xu Z."/>
            <person name="Li H."/>
            <person name="Huang H."/>
            <person name="Zhang F."/>
            <person name="Xu H."/>
            <person name="Li N."/>
            <person name="Zhao C."/>
            <person name="Li S."/>
            <person name="Dong L."/>
            <person name="Huang Y."/>
            <person name="Li L."/>
            <person name="Xi Y."/>
            <person name="Qi Q."/>
            <person name="Li W."/>
            <person name="Zhang B."/>
            <person name="Hu W."/>
            <person name="Zhang Y."/>
            <person name="Tian X."/>
            <person name="Jiao Y."/>
            <person name="Liang X."/>
            <person name="Jin J."/>
            <person name="Gao L."/>
            <person name="Zheng W."/>
            <person name="Hao B."/>
            <person name="Liu S.-M."/>
            <person name="Wang W."/>
            <person name="Yuan L."/>
            <person name="Cao M."/>
            <person name="McDermott J."/>
            <person name="Samudrala R."/>
            <person name="Wang J."/>
            <person name="Wong G.K.-S."/>
            <person name="Yang H."/>
        </authorList>
    </citation>
    <scope>NUCLEOTIDE SEQUENCE [LARGE SCALE GENOMIC DNA]</scope>
    <source>
        <strain>cv. Nipponbare</strain>
    </source>
</reference>
<reference key="6">
    <citation type="journal article" date="2003" name="Science">
        <title>Collection, mapping, and annotation of over 28,000 cDNA clones from japonica rice.</title>
        <authorList>
            <consortium name="The rice full-length cDNA consortium"/>
        </authorList>
    </citation>
    <scope>NUCLEOTIDE SEQUENCE [LARGE SCALE MRNA]</scope>
    <source>
        <strain>cv. Nipponbare</strain>
    </source>
</reference>
<accession>Q7XQ88</accession>
<accession>A0A0N7KJX3</accession>
<evidence type="ECO:0000250" key="1"/>
<evidence type="ECO:0000250" key="2">
    <source>
        <dbReference type="UniProtKB" id="B9KDD4"/>
    </source>
</evidence>
<evidence type="ECO:0000250" key="3">
    <source>
        <dbReference type="UniProtKB" id="P39007"/>
    </source>
</evidence>
<evidence type="ECO:0000250" key="4">
    <source>
        <dbReference type="UniProtKB" id="Q5HTX9"/>
    </source>
</evidence>
<evidence type="ECO:0000250" key="5">
    <source>
        <dbReference type="UniProtKB" id="Q9FX21"/>
    </source>
</evidence>
<evidence type="ECO:0000255" key="6"/>
<evidence type="ECO:0000255" key="7">
    <source>
        <dbReference type="PROSITE-ProRule" id="PRU00498"/>
    </source>
</evidence>
<evidence type="ECO:0000305" key="8"/>
<name>STT3B_ORYSJ</name>
<feature type="chain" id="PRO_0000420539" description="Dolichyl-diphosphooligosaccharide--protein glycosyltransferase subunit STT3B">
    <location>
        <begin position="1"/>
        <end position="721"/>
    </location>
</feature>
<feature type="topological domain" description="Cytoplasmic" evidence="8">
    <location>
        <begin position="1"/>
        <end position="25"/>
    </location>
</feature>
<feature type="transmembrane region" description="Helical" evidence="6">
    <location>
        <begin position="26"/>
        <end position="46"/>
    </location>
</feature>
<feature type="topological domain" description="Lumenal" evidence="8">
    <location>
        <begin position="47"/>
        <end position="129"/>
    </location>
</feature>
<feature type="transmembrane region" description="Helical" evidence="3">
    <location>
        <begin position="130"/>
        <end position="148"/>
    </location>
</feature>
<feature type="topological domain" description="Cytoplasmic" evidence="8">
    <location>
        <begin position="149"/>
        <end position="150"/>
    </location>
</feature>
<feature type="transmembrane region" description="Helical" evidence="3">
    <location>
        <begin position="151"/>
        <end position="168"/>
    </location>
</feature>
<feature type="topological domain" description="Lumenal" evidence="8">
    <location>
        <begin position="169"/>
        <end position="179"/>
    </location>
</feature>
<feature type="transmembrane region" description="Helical" evidence="3">
    <location>
        <begin position="180"/>
        <end position="199"/>
    </location>
</feature>
<feature type="topological domain" description="Cytoplasmic" evidence="8">
    <location>
        <begin position="200"/>
        <end position="201"/>
    </location>
</feature>
<feature type="transmembrane region" description="Helical" evidence="3">
    <location>
        <begin position="202"/>
        <end position="216"/>
    </location>
</feature>
<feature type="topological domain" description="Lumenal" evidence="8">
    <location>
        <begin position="217"/>
        <end position="221"/>
    </location>
</feature>
<feature type="transmembrane region" description="Helical" evidence="3">
    <location>
        <begin position="222"/>
        <end position="238"/>
    </location>
</feature>
<feature type="topological domain" description="Cytoplasmic" evidence="8">
    <location>
        <begin position="239"/>
        <end position="243"/>
    </location>
</feature>
<feature type="transmembrane region" description="Helical" evidence="3">
    <location>
        <begin position="244"/>
        <end position="269"/>
    </location>
</feature>
<feature type="topological domain" description="Lumenal" evidence="8">
    <location>
        <begin position="270"/>
        <end position="277"/>
    </location>
</feature>
<feature type="transmembrane region" description="Helical" evidence="3">
    <location>
        <begin position="278"/>
        <end position="297"/>
    </location>
</feature>
<feature type="topological domain" description="Cytoplasmic" evidence="8">
    <location>
        <begin position="298"/>
        <end position="313"/>
    </location>
</feature>
<feature type="transmembrane region" description="Helical" evidence="6">
    <location>
        <begin position="314"/>
        <end position="334"/>
    </location>
</feature>
<feature type="topological domain" description="Lumenal" evidence="8">
    <location>
        <begin position="335"/>
        <end position="367"/>
    </location>
</feature>
<feature type="transmembrane region" description="Helical" evidence="3">
    <location>
        <begin position="368"/>
        <end position="390"/>
    </location>
</feature>
<feature type="topological domain" description="Cytoplasmic" evidence="8">
    <location>
        <begin position="391"/>
        <end position="396"/>
    </location>
</feature>
<feature type="transmembrane region" description="Helical" evidence="3">
    <location>
        <begin position="397"/>
        <end position="413"/>
    </location>
</feature>
<feature type="topological domain" description="Lumenal" evidence="8">
    <location>
        <begin position="414"/>
        <end position="417"/>
    </location>
</feature>
<feature type="transmembrane region" description="Helical" evidence="3">
    <location>
        <begin position="418"/>
        <end position="439"/>
    </location>
</feature>
<feature type="topological domain" description="Cytoplasmic" evidence="8">
    <location>
        <begin position="440"/>
        <end position="471"/>
    </location>
</feature>
<feature type="transmembrane region" description="Helical" evidence="6">
    <location>
        <begin position="472"/>
        <end position="492"/>
    </location>
</feature>
<feature type="topological domain" description="Lumenal" evidence="8">
    <location>
        <begin position="493"/>
        <end position="721"/>
    </location>
</feature>
<feature type="region of interest" description="Interacts with target acceptor peptide in protein substrate" evidence="2">
    <location>
        <begin position="548"/>
        <end position="550"/>
    </location>
</feature>
<feature type="short sequence motif" description="DXD motif 1" evidence="4">
    <location>
        <begin position="57"/>
        <end position="59"/>
    </location>
</feature>
<feature type="short sequence motif" description="DXD motif 2" evidence="3">
    <location>
        <begin position="177"/>
        <end position="179"/>
    </location>
</feature>
<feature type="short sequence motif" description="SVSE motif" evidence="4">
    <location>
        <begin position="359"/>
        <end position="362"/>
    </location>
</feature>
<feature type="short sequence motif" description="WWDYG motif" evidence="3">
    <location>
        <begin position="548"/>
        <end position="552"/>
    </location>
</feature>
<feature type="short sequence motif" description="DK motif" evidence="3">
    <location>
        <begin position="615"/>
        <end position="622"/>
    </location>
</feature>
<feature type="binding site" evidence="2">
    <location>
        <position position="59"/>
    </location>
    <ligand>
        <name>Mn(2+)</name>
        <dbReference type="ChEBI" id="CHEBI:29035"/>
    </ligand>
</feature>
<feature type="binding site" evidence="2">
    <location>
        <position position="177"/>
    </location>
    <ligand>
        <name>Mn(2+)</name>
        <dbReference type="ChEBI" id="CHEBI:29035"/>
    </ligand>
</feature>
<feature type="binding site" evidence="2">
    <location>
        <position position="179"/>
    </location>
    <ligand>
        <name>Mn(2+)</name>
        <dbReference type="ChEBI" id="CHEBI:29035"/>
    </ligand>
</feature>
<feature type="binding site" evidence="2">
    <location>
        <position position="416"/>
    </location>
    <ligand>
        <name>dolichyl diphosphooligosaccharide</name>
        <dbReference type="ChEBI" id="CHEBI:57570"/>
    </ligand>
</feature>
<feature type="binding site" evidence="2">
    <location>
        <position position="553"/>
    </location>
    <ligand>
        <name>dolichyl diphosphooligosaccharide</name>
        <dbReference type="ChEBI" id="CHEBI:57570"/>
    </ligand>
</feature>
<feature type="site" description="Interacts with target acceptor peptide in protein substrate" evidence="2">
    <location>
        <position position="59"/>
    </location>
</feature>
<feature type="site" description="Important for catalytic activity" evidence="2">
    <location>
        <position position="170"/>
    </location>
</feature>
<feature type="site" description="Interacts with target acceptor peptide in protein substrate" evidence="2">
    <location>
        <position position="362"/>
    </location>
</feature>
<feature type="site" description="Interacts with target acceptor peptide in protein substrate" evidence="2">
    <location>
        <position position="618"/>
    </location>
</feature>
<feature type="glycosylation site" description="N-linked (GlcNAc...) asparagine" evidence="7">
    <location>
        <position position="560"/>
    </location>
</feature>
<feature type="glycosylation site" description="N-linked (GlcNAc...) asparagine" evidence="7">
    <location>
        <position position="567"/>
    </location>
</feature>
<feature type="glycosylation site" description="N-linked (GlcNAc...) (high mannose) asparagine" evidence="3">
    <location>
        <position position="571"/>
    </location>
</feature>